<proteinExistence type="evidence at protein level"/>
<organism>
    <name type="scientific">Homo sapiens</name>
    <name type="common">Human</name>
    <dbReference type="NCBI Taxonomy" id="9606"/>
    <lineage>
        <taxon>Eukaryota</taxon>
        <taxon>Metazoa</taxon>
        <taxon>Chordata</taxon>
        <taxon>Craniata</taxon>
        <taxon>Vertebrata</taxon>
        <taxon>Euteleostomi</taxon>
        <taxon>Mammalia</taxon>
        <taxon>Eutheria</taxon>
        <taxon>Euarchontoglires</taxon>
        <taxon>Primates</taxon>
        <taxon>Haplorrhini</taxon>
        <taxon>Catarrhini</taxon>
        <taxon>Hominidae</taxon>
        <taxon>Homo</taxon>
    </lineage>
</organism>
<name>TRIA1_HUMAN</name>
<comment type="function">
    <text evidence="2 3 4">Involved in the modulation of the mitochondrial apoptotic pathway by ensuring the accumulation of cardiolipin (CL) in mitochondrial membranes. In vitro, the TRIAP1:PRELID1 complex mediates the transfer of phosphatidic acid (PA) between liposomes and probably functions as a PA transporter across the mitochondrion intermembrane space to provide PA for CL synthesis in the inner membrane (PubMed:23931759). Likewise, the TRIAP1:PRELID3A complex mediates the transfer of phosphatidic acid (PA) between liposomes (in vitro) and probably functions as a PA transporter across the mitochondrion intermembrane space (in vivo) (PubMed:26071602). Mediates cell survival by inhibiting activation of caspase-9 which prevents induction of apoptosis (PubMed:15735003).</text>
</comment>
<comment type="catalytic activity">
    <reaction evidence="3">
        <text>a 1,2-diacyl-sn-glycero-3-phosphate(in) = a 1,2-diacyl-sn-glycero-3-phosphate(out)</text>
        <dbReference type="Rhea" id="RHEA:36435"/>
        <dbReference type="ChEBI" id="CHEBI:58608"/>
    </reaction>
</comment>
<comment type="subunit">
    <text evidence="2 3 4">Monomer (PubMed:26071602). Interacts with APAF1 and HSP70 (PubMed:15735003). Forms a complex with PRELID1 in the mitochondrion intermembrane space (PubMed:23931759). Interacts with PRELID3A (PubMed:26071602).</text>
</comment>
<comment type="interaction">
    <interactant intactId="EBI-2820212">
        <id>O43715</id>
    </interactant>
    <interactant intactId="EBI-11911016">
        <id>P80188</id>
        <label>LCN2</label>
    </interactant>
    <organismsDiffer>false</organismsDiffer>
    <experiments>3</experiments>
</comment>
<comment type="interaction">
    <interactant intactId="EBI-2820212">
        <id>O43715</id>
    </interactant>
    <interactant intactId="EBI-742388">
        <id>Q9H8W4</id>
        <label>PLEKHF2</label>
    </interactant>
    <organismsDiffer>false</organismsDiffer>
    <experiments>3</experiments>
</comment>
<comment type="interaction">
    <interactant intactId="EBI-2820212">
        <id>O43715</id>
    </interactant>
    <interactant intactId="EBI-21825875">
        <id>Q9Y3B1</id>
        <label>PRELID3B</label>
    </interactant>
    <organismsDiffer>false</organismsDiffer>
    <experiments>7</experiments>
</comment>
<comment type="subcellular location">
    <subcellularLocation>
        <location evidence="2 3">Mitochondrion</location>
    </subcellularLocation>
    <subcellularLocation>
        <location evidence="3">Mitochondrion intermembrane space</location>
    </subcellularLocation>
</comment>
<comment type="induction">
    <text evidence="2">In p53/TP53-dependent manner in response to low levels of DNA damage. Not induced when DNA damage is severe.</text>
</comment>
<comment type="similarity">
    <text evidence="5">Belongs to the TRIAP1/MDM35 family.</text>
</comment>
<comment type="sequence caution" evidence="5">
    <conflict type="erroneous initiation">
        <sequence resource="EMBL-CDS" id="AAR00584"/>
    </conflict>
    <text>Truncated N-terminus.</text>
</comment>
<comment type="online information" name="Atlas of Genetics and Cytogenetics in Oncology and Haematology">
    <link uri="https://atlasgeneticsoncology.org/gene/44577/TRIAP1"/>
</comment>
<accession>O43715</accession>
<accession>B2R4Z7</accession>
<accession>Q5RKS5</accession>
<accession>Q6LCA7</accession>
<keyword id="KW-0002">3D-structure</keyword>
<keyword id="KW-0007">Acetylation</keyword>
<keyword id="KW-0053">Apoptosis</keyword>
<keyword id="KW-0175">Coiled coil</keyword>
<keyword id="KW-1015">Disulfide bond</keyword>
<keyword id="KW-0445">Lipid transport</keyword>
<keyword id="KW-0496">Mitochondrion</keyword>
<keyword id="KW-1267">Proteomics identification</keyword>
<keyword id="KW-1185">Reference proteome</keyword>
<keyword id="KW-0813">Transport</keyword>
<protein>
    <recommendedName>
        <fullName>TP53-regulated inhibitor of apoptosis 1</fullName>
    </recommendedName>
    <alternativeName>
        <fullName>Protein 15E1.1</fullName>
    </alternativeName>
    <alternativeName>
        <fullName>WF-1</fullName>
    </alternativeName>
    <alternativeName>
        <fullName>p53-inducible cell-survival factor</fullName>
        <shortName>p53CSV</shortName>
    </alternativeName>
</protein>
<reference key="1">
    <citation type="journal article" date="2005" name="Cancer Res.">
        <title>p53CSV, a novel p53-inducible gene involved in the p53-dependent cell-survival pathway.</title>
        <authorList>
            <person name="Park W.-R."/>
            <person name="Nakamura Y."/>
        </authorList>
    </citation>
    <scope>NUCLEOTIDE SEQUENCE [MRNA]</scope>
    <scope>FUNCTION</scope>
    <scope>SUBCELLULAR LOCATION</scope>
    <scope>INTERACTION WITH ARAF AND HSP70</scope>
    <scope>INDUCTION</scope>
</reference>
<reference key="2">
    <citation type="journal article" date="2000" name="Genome Res.">
        <title>Cloning and functional analysis of cDNAs with open reading frames for 300 previously undefined genes expressed in CD34+ hematopoietic stem/progenitor cells.</title>
        <authorList>
            <person name="Zhang Q.-H."/>
            <person name="Ye M."/>
            <person name="Wu X.-Y."/>
            <person name="Ren S.-X."/>
            <person name="Zhao M."/>
            <person name="Zhao C.-J."/>
            <person name="Fu G."/>
            <person name="Shen Y."/>
            <person name="Fan H.-Y."/>
            <person name="Lu G."/>
            <person name="Zhong M."/>
            <person name="Xu X.-R."/>
            <person name="Han Z.-G."/>
            <person name="Zhang J.-W."/>
            <person name="Tao J."/>
            <person name="Huang Q.-H."/>
            <person name="Zhou J."/>
            <person name="Hu G.-X."/>
            <person name="Gu J."/>
            <person name="Chen S.-J."/>
            <person name="Chen Z."/>
        </authorList>
    </citation>
    <scope>NUCLEOTIDE SEQUENCE [LARGE SCALE MRNA]</scope>
    <source>
        <tissue>Umbilical cord blood</tissue>
    </source>
</reference>
<reference key="3">
    <citation type="journal article" date="2004" name="Nat. Genet.">
        <title>Complete sequencing and characterization of 21,243 full-length human cDNAs.</title>
        <authorList>
            <person name="Ota T."/>
            <person name="Suzuki Y."/>
            <person name="Nishikawa T."/>
            <person name="Otsuki T."/>
            <person name="Sugiyama T."/>
            <person name="Irie R."/>
            <person name="Wakamatsu A."/>
            <person name="Hayashi K."/>
            <person name="Sato H."/>
            <person name="Nagai K."/>
            <person name="Kimura K."/>
            <person name="Makita H."/>
            <person name="Sekine M."/>
            <person name="Obayashi M."/>
            <person name="Nishi T."/>
            <person name="Shibahara T."/>
            <person name="Tanaka T."/>
            <person name="Ishii S."/>
            <person name="Yamamoto J."/>
            <person name="Saito K."/>
            <person name="Kawai Y."/>
            <person name="Isono Y."/>
            <person name="Nakamura Y."/>
            <person name="Nagahari K."/>
            <person name="Murakami K."/>
            <person name="Yasuda T."/>
            <person name="Iwayanagi T."/>
            <person name="Wagatsuma M."/>
            <person name="Shiratori A."/>
            <person name="Sudo H."/>
            <person name="Hosoiri T."/>
            <person name="Kaku Y."/>
            <person name="Kodaira H."/>
            <person name="Kondo H."/>
            <person name="Sugawara M."/>
            <person name="Takahashi M."/>
            <person name="Kanda K."/>
            <person name="Yokoi T."/>
            <person name="Furuya T."/>
            <person name="Kikkawa E."/>
            <person name="Omura Y."/>
            <person name="Abe K."/>
            <person name="Kamihara K."/>
            <person name="Katsuta N."/>
            <person name="Sato K."/>
            <person name="Tanikawa M."/>
            <person name="Yamazaki M."/>
            <person name="Ninomiya K."/>
            <person name="Ishibashi T."/>
            <person name="Yamashita H."/>
            <person name="Murakawa K."/>
            <person name="Fujimori K."/>
            <person name="Tanai H."/>
            <person name="Kimata M."/>
            <person name="Watanabe M."/>
            <person name="Hiraoka S."/>
            <person name="Chiba Y."/>
            <person name="Ishida S."/>
            <person name="Ono Y."/>
            <person name="Takiguchi S."/>
            <person name="Watanabe S."/>
            <person name="Yosida M."/>
            <person name="Hotuta T."/>
            <person name="Kusano J."/>
            <person name="Kanehori K."/>
            <person name="Takahashi-Fujii A."/>
            <person name="Hara H."/>
            <person name="Tanase T.-O."/>
            <person name="Nomura Y."/>
            <person name="Togiya S."/>
            <person name="Komai F."/>
            <person name="Hara R."/>
            <person name="Takeuchi K."/>
            <person name="Arita M."/>
            <person name="Imose N."/>
            <person name="Musashino K."/>
            <person name="Yuuki H."/>
            <person name="Oshima A."/>
            <person name="Sasaki N."/>
            <person name="Aotsuka S."/>
            <person name="Yoshikawa Y."/>
            <person name="Matsunawa H."/>
            <person name="Ichihara T."/>
            <person name="Shiohata N."/>
            <person name="Sano S."/>
            <person name="Moriya S."/>
            <person name="Momiyama H."/>
            <person name="Satoh N."/>
            <person name="Takami S."/>
            <person name="Terashima Y."/>
            <person name="Suzuki O."/>
            <person name="Nakagawa S."/>
            <person name="Senoh A."/>
            <person name="Mizoguchi H."/>
            <person name="Goto Y."/>
            <person name="Shimizu F."/>
            <person name="Wakebe H."/>
            <person name="Hishigaki H."/>
            <person name="Watanabe T."/>
            <person name="Sugiyama A."/>
            <person name="Takemoto M."/>
            <person name="Kawakami B."/>
            <person name="Yamazaki M."/>
            <person name="Watanabe K."/>
            <person name="Kumagai A."/>
            <person name="Itakura S."/>
            <person name="Fukuzumi Y."/>
            <person name="Fujimori Y."/>
            <person name="Komiyama M."/>
            <person name="Tashiro H."/>
            <person name="Tanigami A."/>
            <person name="Fujiwara T."/>
            <person name="Ono T."/>
            <person name="Yamada K."/>
            <person name="Fujii Y."/>
            <person name="Ozaki K."/>
            <person name="Hirao M."/>
            <person name="Ohmori Y."/>
            <person name="Kawabata A."/>
            <person name="Hikiji T."/>
            <person name="Kobatake N."/>
            <person name="Inagaki H."/>
            <person name="Ikema Y."/>
            <person name="Okamoto S."/>
            <person name="Okitani R."/>
            <person name="Kawakami T."/>
            <person name="Noguchi S."/>
            <person name="Itoh T."/>
            <person name="Shigeta K."/>
            <person name="Senba T."/>
            <person name="Matsumura K."/>
            <person name="Nakajima Y."/>
            <person name="Mizuno T."/>
            <person name="Morinaga M."/>
            <person name="Sasaki M."/>
            <person name="Togashi T."/>
            <person name="Oyama M."/>
            <person name="Hata H."/>
            <person name="Watanabe M."/>
            <person name="Komatsu T."/>
            <person name="Mizushima-Sugano J."/>
            <person name="Satoh T."/>
            <person name="Shirai Y."/>
            <person name="Takahashi Y."/>
            <person name="Nakagawa K."/>
            <person name="Okumura K."/>
            <person name="Nagase T."/>
            <person name="Nomura N."/>
            <person name="Kikuchi H."/>
            <person name="Masuho Y."/>
            <person name="Yamashita R."/>
            <person name="Nakai K."/>
            <person name="Yada T."/>
            <person name="Nakamura Y."/>
            <person name="Ohara O."/>
            <person name="Isogai T."/>
            <person name="Sugano S."/>
        </authorList>
    </citation>
    <scope>NUCLEOTIDE SEQUENCE [LARGE SCALE MRNA]</scope>
    <source>
        <tissue>Brain</tissue>
    </source>
</reference>
<reference key="4">
    <citation type="journal article" date="2006" name="Nature">
        <title>The finished DNA sequence of human chromosome 12.</title>
        <authorList>
            <person name="Scherer S.E."/>
            <person name="Muzny D.M."/>
            <person name="Buhay C.J."/>
            <person name="Chen R."/>
            <person name="Cree A."/>
            <person name="Ding Y."/>
            <person name="Dugan-Rocha S."/>
            <person name="Gill R."/>
            <person name="Gunaratne P."/>
            <person name="Harris R.A."/>
            <person name="Hawes A.C."/>
            <person name="Hernandez J."/>
            <person name="Hodgson A.V."/>
            <person name="Hume J."/>
            <person name="Jackson A."/>
            <person name="Khan Z.M."/>
            <person name="Kovar-Smith C."/>
            <person name="Lewis L.R."/>
            <person name="Lozado R.J."/>
            <person name="Metzker M.L."/>
            <person name="Milosavljevic A."/>
            <person name="Miner G.R."/>
            <person name="Montgomery K.T."/>
            <person name="Morgan M.B."/>
            <person name="Nazareth L.V."/>
            <person name="Scott G."/>
            <person name="Sodergren E."/>
            <person name="Song X.-Z."/>
            <person name="Steffen D."/>
            <person name="Lovering R.C."/>
            <person name="Wheeler D.A."/>
            <person name="Worley K.C."/>
            <person name="Yuan Y."/>
            <person name="Zhang Z."/>
            <person name="Adams C.Q."/>
            <person name="Ansari-Lari M.A."/>
            <person name="Ayele M."/>
            <person name="Brown M.J."/>
            <person name="Chen G."/>
            <person name="Chen Z."/>
            <person name="Clerc-Blankenburg K.P."/>
            <person name="Davis C."/>
            <person name="Delgado O."/>
            <person name="Dinh H.H."/>
            <person name="Draper H."/>
            <person name="Gonzalez-Garay M.L."/>
            <person name="Havlak P."/>
            <person name="Jackson L.R."/>
            <person name="Jacob L.S."/>
            <person name="Kelly S.H."/>
            <person name="Li L."/>
            <person name="Li Z."/>
            <person name="Liu J."/>
            <person name="Liu W."/>
            <person name="Lu J."/>
            <person name="Maheshwari M."/>
            <person name="Nguyen B.-V."/>
            <person name="Okwuonu G.O."/>
            <person name="Pasternak S."/>
            <person name="Perez L.M."/>
            <person name="Plopper F.J.H."/>
            <person name="Santibanez J."/>
            <person name="Shen H."/>
            <person name="Tabor P.E."/>
            <person name="Verduzco D."/>
            <person name="Waldron L."/>
            <person name="Wang Q."/>
            <person name="Williams G.A."/>
            <person name="Zhang J."/>
            <person name="Zhou J."/>
            <person name="Allen C.C."/>
            <person name="Amin A.G."/>
            <person name="Anyalebechi V."/>
            <person name="Bailey M."/>
            <person name="Barbaria J.A."/>
            <person name="Bimage K.E."/>
            <person name="Bryant N.P."/>
            <person name="Burch P.E."/>
            <person name="Burkett C.E."/>
            <person name="Burrell K.L."/>
            <person name="Calderon E."/>
            <person name="Cardenas V."/>
            <person name="Carter K."/>
            <person name="Casias K."/>
            <person name="Cavazos I."/>
            <person name="Cavazos S.R."/>
            <person name="Ceasar H."/>
            <person name="Chacko J."/>
            <person name="Chan S.N."/>
            <person name="Chavez D."/>
            <person name="Christopoulos C."/>
            <person name="Chu J."/>
            <person name="Cockrell R."/>
            <person name="Cox C.D."/>
            <person name="Dang M."/>
            <person name="Dathorne S.R."/>
            <person name="David R."/>
            <person name="Davis C.M."/>
            <person name="Davy-Carroll L."/>
            <person name="Deshazo D.R."/>
            <person name="Donlin J.E."/>
            <person name="D'Souza L."/>
            <person name="Eaves K.A."/>
            <person name="Egan A."/>
            <person name="Emery-Cohen A.J."/>
            <person name="Escotto M."/>
            <person name="Flagg N."/>
            <person name="Forbes L.D."/>
            <person name="Gabisi A.M."/>
            <person name="Garza M."/>
            <person name="Hamilton C."/>
            <person name="Henderson N."/>
            <person name="Hernandez O."/>
            <person name="Hines S."/>
            <person name="Hogues M.E."/>
            <person name="Huang M."/>
            <person name="Idlebird D.G."/>
            <person name="Johnson R."/>
            <person name="Jolivet A."/>
            <person name="Jones S."/>
            <person name="Kagan R."/>
            <person name="King L.M."/>
            <person name="Leal B."/>
            <person name="Lebow H."/>
            <person name="Lee S."/>
            <person name="LeVan J.M."/>
            <person name="Lewis L.C."/>
            <person name="London P."/>
            <person name="Lorensuhewa L.M."/>
            <person name="Loulseged H."/>
            <person name="Lovett D.A."/>
            <person name="Lucier A."/>
            <person name="Lucier R.L."/>
            <person name="Ma J."/>
            <person name="Madu R.C."/>
            <person name="Mapua P."/>
            <person name="Martindale A.D."/>
            <person name="Martinez E."/>
            <person name="Massey E."/>
            <person name="Mawhiney S."/>
            <person name="Meador M.G."/>
            <person name="Mendez S."/>
            <person name="Mercado C."/>
            <person name="Mercado I.C."/>
            <person name="Merritt C.E."/>
            <person name="Miner Z.L."/>
            <person name="Minja E."/>
            <person name="Mitchell T."/>
            <person name="Mohabbat F."/>
            <person name="Mohabbat K."/>
            <person name="Montgomery B."/>
            <person name="Moore N."/>
            <person name="Morris S."/>
            <person name="Munidasa M."/>
            <person name="Ngo R.N."/>
            <person name="Nguyen N.B."/>
            <person name="Nickerson E."/>
            <person name="Nwaokelemeh O.O."/>
            <person name="Nwokenkwo S."/>
            <person name="Obregon M."/>
            <person name="Oguh M."/>
            <person name="Oragunye N."/>
            <person name="Oviedo R.J."/>
            <person name="Parish B.J."/>
            <person name="Parker D.N."/>
            <person name="Parrish J."/>
            <person name="Parks K.L."/>
            <person name="Paul H.A."/>
            <person name="Payton B.A."/>
            <person name="Perez A."/>
            <person name="Perrin W."/>
            <person name="Pickens A."/>
            <person name="Primus E.L."/>
            <person name="Pu L.-L."/>
            <person name="Puazo M."/>
            <person name="Quiles M.M."/>
            <person name="Quiroz J.B."/>
            <person name="Rabata D."/>
            <person name="Reeves K."/>
            <person name="Ruiz S.J."/>
            <person name="Shao H."/>
            <person name="Sisson I."/>
            <person name="Sonaike T."/>
            <person name="Sorelle R.P."/>
            <person name="Sutton A.E."/>
            <person name="Svatek A.F."/>
            <person name="Svetz L.A."/>
            <person name="Tamerisa K.S."/>
            <person name="Taylor T.R."/>
            <person name="Teague B."/>
            <person name="Thomas N."/>
            <person name="Thorn R.D."/>
            <person name="Trejos Z.Y."/>
            <person name="Trevino B.K."/>
            <person name="Ukegbu O.N."/>
            <person name="Urban J.B."/>
            <person name="Vasquez L.I."/>
            <person name="Vera V.A."/>
            <person name="Villasana D.M."/>
            <person name="Wang L."/>
            <person name="Ward-Moore S."/>
            <person name="Warren J.T."/>
            <person name="Wei X."/>
            <person name="White F."/>
            <person name="Williamson A.L."/>
            <person name="Wleczyk R."/>
            <person name="Wooden H.S."/>
            <person name="Wooden S.H."/>
            <person name="Yen J."/>
            <person name="Yoon L."/>
            <person name="Yoon V."/>
            <person name="Zorrilla S.E."/>
            <person name="Nelson D."/>
            <person name="Kucherlapati R."/>
            <person name="Weinstock G."/>
            <person name="Gibbs R.A."/>
        </authorList>
    </citation>
    <scope>NUCLEOTIDE SEQUENCE [LARGE SCALE GENOMIC DNA]</scope>
</reference>
<reference key="5">
    <citation type="submission" date="2005-07" db="EMBL/GenBank/DDBJ databases">
        <authorList>
            <person name="Mural R.J."/>
            <person name="Istrail S."/>
            <person name="Sutton G.G."/>
            <person name="Florea L."/>
            <person name="Halpern A.L."/>
            <person name="Mobarry C.M."/>
            <person name="Lippert R."/>
            <person name="Walenz B."/>
            <person name="Shatkay H."/>
            <person name="Dew I."/>
            <person name="Miller J.R."/>
            <person name="Flanigan M.J."/>
            <person name="Edwards N.J."/>
            <person name="Bolanos R."/>
            <person name="Fasulo D."/>
            <person name="Halldorsson B.V."/>
            <person name="Hannenhalli S."/>
            <person name="Turner R."/>
            <person name="Yooseph S."/>
            <person name="Lu F."/>
            <person name="Nusskern D.R."/>
            <person name="Shue B.C."/>
            <person name="Zheng X.H."/>
            <person name="Zhong F."/>
            <person name="Delcher A.L."/>
            <person name="Huson D.H."/>
            <person name="Kravitz S.A."/>
            <person name="Mouchard L."/>
            <person name="Reinert K."/>
            <person name="Remington K.A."/>
            <person name="Clark A.G."/>
            <person name="Waterman M.S."/>
            <person name="Eichler E.E."/>
            <person name="Adams M.D."/>
            <person name="Hunkapiller M.W."/>
            <person name="Myers E.W."/>
            <person name="Venter J.C."/>
        </authorList>
    </citation>
    <scope>NUCLEOTIDE SEQUENCE [LARGE SCALE GENOMIC DNA]</scope>
</reference>
<reference key="6">
    <citation type="journal article" date="2004" name="Genome Res.">
        <title>The status, quality, and expansion of the NIH full-length cDNA project: the Mammalian Gene Collection (MGC).</title>
        <authorList>
            <consortium name="The MGC Project Team"/>
        </authorList>
    </citation>
    <scope>NUCLEOTIDE SEQUENCE [LARGE SCALE MRNA]</scope>
    <source>
        <tissue>Brain</tissue>
        <tissue>Uterus</tissue>
    </source>
</reference>
<reference key="7">
    <citation type="submission" date="1996-10" db="EMBL/GenBank/DDBJ databases">
        <authorList>
            <person name="Sugihara T."/>
            <person name="Tanaka M."/>
            <person name="Mitusi Y."/>
        </authorList>
    </citation>
    <scope>NUCLEOTIDE SEQUENCE [MRNA] OF 4-76</scope>
    <source>
        <tissue>Heart</tissue>
    </source>
</reference>
<reference key="8">
    <citation type="journal article" date="2009" name="Anal. Chem.">
        <title>Lys-N and trypsin cover complementary parts of the phosphoproteome in a refined SCX-based approach.</title>
        <authorList>
            <person name="Gauci S."/>
            <person name="Helbig A.O."/>
            <person name="Slijper M."/>
            <person name="Krijgsveld J."/>
            <person name="Heck A.J."/>
            <person name="Mohammed S."/>
        </authorList>
    </citation>
    <scope>ACETYLATION [LARGE SCALE ANALYSIS] AT MET-1</scope>
    <scope>IDENTIFICATION BY MASS SPECTROMETRY [LARGE SCALE ANALYSIS]</scope>
</reference>
<reference key="9">
    <citation type="journal article" date="2011" name="BMC Syst. Biol.">
        <title>Initial characterization of the human central proteome.</title>
        <authorList>
            <person name="Burkard T.R."/>
            <person name="Planyavsky M."/>
            <person name="Kaupe I."/>
            <person name="Breitwieser F.P."/>
            <person name="Buerckstuemmer T."/>
            <person name="Bennett K.L."/>
            <person name="Superti-Furga G."/>
            <person name="Colinge J."/>
        </authorList>
    </citation>
    <scope>IDENTIFICATION BY MASS SPECTROMETRY [LARGE SCALE ANALYSIS]</scope>
</reference>
<reference key="10">
    <citation type="journal article" date="2012" name="Proc. Natl. Acad. Sci. U.S.A.">
        <title>N-terminal acetylome analyses and functional insights of the N-terminal acetyltransferase NatB.</title>
        <authorList>
            <person name="Van Damme P."/>
            <person name="Lasa M."/>
            <person name="Polevoda B."/>
            <person name="Gazquez C."/>
            <person name="Elosegui-Artola A."/>
            <person name="Kim D.S."/>
            <person name="De Juan-Pardo E."/>
            <person name="Demeyer K."/>
            <person name="Hole K."/>
            <person name="Larrea E."/>
            <person name="Timmerman E."/>
            <person name="Prieto J."/>
            <person name="Arnesen T."/>
            <person name="Sherman F."/>
            <person name="Gevaert K."/>
            <person name="Aldabe R."/>
        </authorList>
    </citation>
    <scope>ACETYLATION [LARGE SCALE ANALYSIS] AT MET-1</scope>
    <scope>IDENTIFICATION BY MASS SPECTROMETRY [LARGE SCALE ANALYSIS]</scope>
</reference>
<reference key="11">
    <citation type="journal article" date="2013" name="Cell Metab.">
        <title>TRIAP1/PRELI complexes prevent apoptosis by mediating intramitochondrial transport of phosphatidic acid.</title>
        <authorList>
            <person name="Potting C."/>
            <person name="Tatsuta T."/>
            <person name="Konig T."/>
            <person name="Haag M."/>
            <person name="Wai T."/>
            <person name="Aaltonen M.J."/>
            <person name="Langer T."/>
        </authorList>
    </citation>
    <scope>FUNCTION</scope>
    <scope>CATALYTIC ACTIVITY</scope>
    <scope>SUBUNIT</scope>
    <scope>SUBCELLULAR LOCATION</scope>
</reference>
<reference key="12">
    <citation type="journal article" date="2014" name="J. Proteomics">
        <title>An enzyme assisted RP-RPLC approach for in-depth analysis of human liver phosphoproteome.</title>
        <authorList>
            <person name="Bian Y."/>
            <person name="Song C."/>
            <person name="Cheng K."/>
            <person name="Dong M."/>
            <person name="Wang F."/>
            <person name="Huang J."/>
            <person name="Sun D."/>
            <person name="Wang L."/>
            <person name="Ye M."/>
            <person name="Zou H."/>
        </authorList>
    </citation>
    <scope>IDENTIFICATION BY MASS SPECTROMETRY [LARGE SCALE ANALYSIS]</scope>
    <source>
        <tissue>Liver</tissue>
    </source>
</reference>
<reference key="13">
    <citation type="journal article" date="2015" name="EMBO Rep.">
        <title>Structural insight into the TRIAP1/PRELI-like domain family of mitochondrial phospholipid transfer complexes.</title>
        <authorList>
            <person name="Miliara X."/>
            <person name="Garnett J.A."/>
            <person name="Tatsuta T."/>
            <person name="Abid Ali F."/>
            <person name="Baldie H."/>
            <person name="Perez-Dorado I."/>
            <person name="Simpson P."/>
            <person name="Yague E."/>
            <person name="Langer T."/>
            <person name="Matthews S."/>
        </authorList>
    </citation>
    <scope>X-RAY CRYSTALLOGRAPHY (2.12 ANGSTROMS) OF 2-76 IN COMPLEX WITH PRELID3A</scope>
    <scope>NMR</scope>
    <scope>INTERACTION WITH PRELID3A</scope>
    <scope>SUBUNIT</scope>
    <scope>DISULFIDE BOND</scope>
    <scope>FUNCTION</scope>
    <scope>MUTAGENESIS OF PHE-27</scope>
</reference>
<feature type="chain" id="PRO_0000220523" description="TP53-regulated inhibitor of apoptosis 1">
    <location>
        <begin position="1"/>
        <end position="76"/>
    </location>
</feature>
<feature type="domain" description="CHCH" evidence="1">
    <location>
        <begin position="5"/>
        <end position="55"/>
    </location>
</feature>
<feature type="coiled-coil region" evidence="4">
    <location>
        <begin position="1"/>
        <end position="52"/>
    </location>
</feature>
<feature type="short sequence motif" description="Cx9C motif 1" evidence="1">
    <location>
        <begin position="8"/>
        <end position="18"/>
    </location>
</feature>
<feature type="short sequence motif" description="Cx9C motif 2" evidence="1">
    <location>
        <begin position="37"/>
        <end position="47"/>
    </location>
</feature>
<feature type="site" description="Important for interaction with PRELID3A" evidence="4">
    <location>
        <position position="27"/>
    </location>
</feature>
<feature type="site" description="Important for interaction with PRELID3A" evidence="4">
    <location>
        <position position="41"/>
    </location>
</feature>
<feature type="modified residue" description="N-acetylmethionine" evidence="8 9">
    <location>
        <position position="1"/>
    </location>
</feature>
<feature type="disulfide bond" evidence="1 4 6 7">
    <location>
        <begin position="8"/>
        <end position="47"/>
    </location>
</feature>
<feature type="disulfide bond" evidence="1 4 6 7">
    <location>
        <begin position="18"/>
        <end position="37"/>
    </location>
</feature>
<feature type="mutagenesis site" description="Impairs interaction with PRELID3A." evidence="4">
    <original>F</original>
    <variation>A</variation>
    <location>
        <position position="27"/>
    </location>
</feature>
<feature type="helix" evidence="10">
    <location>
        <begin position="6"/>
        <end position="8"/>
    </location>
</feature>
<feature type="helix" evidence="10">
    <location>
        <begin position="9"/>
        <end position="25"/>
    </location>
</feature>
<feature type="helix" evidence="10">
    <location>
        <begin position="27"/>
        <end position="29"/>
    </location>
</feature>
<feature type="strand" evidence="11">
    <location>
        <begin position="34"/>
        <end position="37"/>
    </location>
</feature>
<feature type="helix" evidence="10">
    <location>
        <begin position="38"/>
        <end position="54"/>
    </location>
</feature>
<feature type="helix" evidence="10">
    <location>
        <begin position="64"/>
        <end position="66"/>
    </location>
</feature>
<dbReference type="EMBL" id="AF161481">
    <property type="protein sequence ID" value="AAF29096.1"/>
    <property type="molecule type" value="mRNA"/>
</dbReference>
<dbReference type="EMBL" id="AL021546">
    <property type="status" value="NOT_ANNOTATED_CDS"/>
    <property type="molecule type" value="Genomic_DNA"/>
</dbReference>
<dbReference type="EMBL" id="AK312006">
    <property type="protein sequence ID" value="BAG34944.1"/>
    <property type="molecule type" value="mRNA"/>
</dbReference>
<dbReference type="EMBL" id="CH471054">
    <property type="protein sequence ID" value="EAW98192.1"/>
    <property type="molecule type" value="Genomic_DNA"/>
</dbReference>
<dbReference type="EMBL" id="BC002638">
    <property type="protein sequence ID" value="AAH02638.1"/>
    <property type="molecule type" value="mRNA"/>
</dbReference>
<dbReference type="EMBL" id="BC055313">
    <property type="protein sequence ID" value="AAH55313.1"/>
    <property type="molecule type" value="mRNA"/>
</dbReference>
<dbReference type="EMBL" id="U75688">
    <property type="protein sequence ID" value="AAR00584.1"/>
    <property type="status" value="ALT_INIT"/>
    <property type="molecule type" value="mRNA"/>
</dbReference>
<dbReference type="CCDS" id="CCDS9198.1"/>
<dbReference type="PIR" id="T09476">
    <property type="entry name" value="T09476"/>
</dbReference>
<dbReference type="RefSeq" id="NP_057483.1">
    <property type="nucleotide sequence ID" value="NM_016399.3"/>
</dbReference>
<dbReference type="PDB" id="4XZS">
    <property type="method" value="X-ray"/>
    <property type="resolution" value="2.12 A"/>
    <property type="chains" value="A/B=2-76"/>
</dbReference>
<dbReference type="PDB" id="4XZV">
    <property type="method" value="X-ray"/>
    <property type="resolution" value="3.58 A"/>
    <property type="chains" value="A/C/E/G=2-76"/>
</dbReference>
<dbReference type="PDB" id="6I3V">
    <property type="method" value="X-ray"/>
    <property type="resolution" value="1.98 A"/>
    <property type="chains" value="A/C=1-67"/>
</dbReference>
<dbReference type="PDB" id="6I3Y">
    <property type="method" value="X-ray"/>
    <property type="resolution" value="2.98 A"/>
    <property type="chains" value="A/H=1-76"/>
</dbReference>
<dbReference type="PDB" id="6I4Y">
    <property type="method" value="X-ray"/>
    <property type="resolution" value="2.91 A"/>
    <property type="chains" value="A=4-76"/>
</dbReference>
<dbReference type="PDB" id="8AG0">
    <property type="method" value="X-ray"/>
    <property type="resolution" value="2.70 A"/>
    <property type="chains" value="B=2-76"/>
</dbReference>
<dbReference type="PDBsum" id="4XZS"/>
<dbReference type="PDBsum" id="4XZV"/>
<dbReference type="PDBsum" id="6I3V"/>
<dbReference type="PDBsum" id="6I3Y"/>
<dbReference type="PDBsum" id="6I4Y"/>
<dbReference type="PDBsum" id="8AG0"/>
<dbReference type="SMR" id="O43715"/>
<dbReference type="BioGRID" id="119573">
    <property type="interactions" value="53"/>
</dbReference>
<dbReference type="FunCoup" id="O43715">
    <property type="interactions" value="1338"/>
</dbReference>
<dbReference type="IntAct" id="O43715">
    <property type="interactions" value="19"/>
</dbReference>
<dbReference type="MINT" id="O43715"/>
<dbReference type="STRING" id="9606.ENSP00000449795"/>
<dbReference type="SwissLipids" id="SLP:000000338"/>
<dbReference type="TCDB" id="3.A.9.1.1">
    <property type="family name" value="the chloroplast envelope protein translocase (cept or tic-toc) family"/>
</dbReference>
<dbReference type="iPTMnet" id="O43715"/>
<dbReference type="PhosphoSitePlus" id="O43715"/>
<dbReference type="BioMuta" id="TRIAP1"/>
<dbReference type="jPOST" id="O43715"/>
<dbReference type="MassIVE" id="O43715"/>
<dbReference type="PaxDb" id="9606-ENSP00000449795"/>
<dbReference type="PeptideAtlas" id="O43715"/>
<dbReference type="ProteomicsDB" id="49131"/>
<dbReference type="Pumba" id="O43715"/>
<dbReference type="Antibodypedia" id="53934">
    <property type="antibodies" value="47 antibodies from 17 providers"/>
</dbReference>
<dbReference type="DNASU" id="51499"/>
<dbReference type="Ensembl" id="ENST00000546954.2">
    <property type="protein sequence ID" value="ENSP00000449795.1"/>
    <property type="gene ID" value="ENSG00000170855.4"/>
</dbReference>
<dbReference type="GeneID" id="51499"/>
<dbReference type="KEGG" id="hsa:51499"/>
<dbReference type="MANE-Select" id="ENST00000546954.2">
    <property type="protein sequence ID" value="ENSP00000449795.1"/>
    <property type="RefSeq nucleotide sequence ID" value="NM_016399.3"/>
    <property type="RefSeq protein sequence ID" value="NP_057483.1"/>
</dbReference>
<dbReference type="UCSC" id="uc001tyg.3">
    <property type="organism name" value="human"/>
</dbReference>
<dbReference type="AGR" id="HGNC:26937"/>
<dbReference type="CTD" id="51499"/>
<dbReference type="DisGeNET" id="51499"/>
<dbReference type="GeneCards" id="TRIAP1"/>
<dbReference type="HGNC" id="HGNC:26937">
    <property type="gene designation" value="TRIAP1"/>
</dbReference>
<dbReference type="HPA" id="ENSG00000170855">
    <property type="expression patterns" value="Low tissue specificity"/>
</dbReference>
<dbReference type="MIM" id="614943">
    <property type="type" value="gene"/>
</dbReference>
<dbReference type="neXtProt" id="NX_O43715"/>
<dbReference type="OpenTargets" id="ENSG00000170855"/>
<dbReference type="PharmGKB" id="PA143485661"/>
<dbReference type="VEuPathDB" id="HostDB:ENSG00000170855"/>
<dbReference type="eggNOG" id="KOG3481">
    <property type="taxonomic scope" value="Eukaryota"/>
</dbReference>
<dbReference type="GeneTree" id="ENSGT00940000162087"/>
<dbReference type="HOGENOM" id="CLU_101473_4_0_1"/>
<dbReference type="InParanoid" id="O43715"/>
<dbReference type="OMA" id="KKYDDCF"/>
<dbReference type="OrthoDB" id="19091at2759"/>
<dbReference type="PAN-GO" id="O43715">
    <property type="GO annotations" value="4 GO annotations based on evolutionary models"/>
</dbReference>
<dbReference type="PhylomeDB" id="O43715"/>
<dbReference type="TreeFam" id="TF326640"/>
<dbReference type="PathwayCommons" id="O43715"/>
<dbReference type="Reactome" id="R-HSA-6803204">
    <property type="pathway name" value="TP53 Regulates Transcription of Genes Involved in Cytochrome C Release"/>
</dbReference>
<dbReference type="Reactome" id="R-HSA-9837999">
    <property type="pathway name" value="Mitochondrial protein degradation"/>
</dbReference>
<dbReference type="SignaLink" id="O43715"/>
<dbReference type="BioGRID-ORCS" id="51499">
    <property type="hits" value="739 hits in 1192 CRISPR screens"/>
</dbReference>
<dbReference type="ChiTaRS" id="TRIAP1">
    <property type="organism name" value="human"/>
</dbReference>
<dbReference type="EvolutionaryTrace" id="O43715"/>
<dbReference type="GenomeRNAi" id="51499"/>
<dbReference type="Pharos" id="O43715">
    <property type="development level" value="Tbio"/>
</dbReference>
<dbReference type="PRO" id="PR:O43715"/>
<dbReference type="Proteomes" id="UP000005640">
    <property type="component" value="Chromosome 12"/>
</dbReference>
<dbReference type="RNAct" id="O43715">
    <property type="molecule type" value="protein"/>
</dbReference>
<dbReference type="Bgee" id="ENSG00000170855">
    <property type="expression patterns" value="Expressed in tendon of biceps brachii and 213 other cell types or tissues"/>
</dbReference>
<dbReference type="GO" id="GO:0005758">
    <property type="term" value="C:mitochondrial intermembrane space"/>
    <property type="evidence" value="ECO:0000314"/>
    <property type="project" value="UniProtKB"/>
</dbReference>
<dbReference type="GO" id="GO:0005739">
    <property type="term" value="C:mitochondrion"/>
    <property type="evidence" value="ECO:0000314"/>
    <property type="project" value="HGNC-UCL"/>
</dbReference>
<dbReference type="GO" id="GO:0005654">
    <property type="term" value="C:nucleoplasm"/>
    <property type="evidence" value="ECO:0000314"/>
    <property type="project" value="HPA"/>
</dbReference>
<dbReference type="GO" id="GO:0005634">
    <property type="term" value="C:nucleus"/>
    <property type="evidence" value="ECO:0000318"/>
    <property type="project" value="GO_Central"/>
</dbReference>
<dbReference type="GO" id="GO:0032991">
    <property type="term" value="C:protein-containing complex"/>
    <property type="evidence" value="ECO:0000314"/>
    <property type="project" value="UniProtKB"/>
</dbReference>
<dbReference type="GO" id="GO:0002039">
    <property type="term" value="F:p53 binding"/>
    <property type="evidence" value="ECO:0000353"/>
    <property type="project" value="BHF-UCL"/>
</dbReference>
<dbReference type="GO" id="GO:0006915">
    <property type="term" value="P:apoptotic process"/>
    <property type="evidence" value="ECO:0007669"/>
    <property type="project" value="UniProtKB-KW"/>
</dbReference>
<dbReference type="GO" id="GO:0034644">
    <property type="term" value="P:cellular response to UV"/>
    <property type="evidence" value="ECO:0000314"/>
    <property type="project" value="BHF-UCL"/>
</dbReference>
<dbReference type="GO" id="GO:0030330">
    <property type="term" value="P:DNA damage response, signal transduction by p53 class mediator"/>
    <property type="evidence" value="ECO:0000314"/>
    <property type="project" value="BHF-UCL"/>
</dbReference>
<dbReference type="GO" id="GO:0120009">
    <property type="term" value="P:intermembrane lipid transfer"/>
    <property type="evidence" value="ECO:0007669"/>
    <property type="project" value="GOC"/>
</dbReference>
<dbReference type="GO" id="GO:0031571">
    <property type="term" value="P:mitotic G1 DNA damage checkpoint signaling"/>
    <property type="evidence" value="ECO:0000314"/>
    <property type="project" value="BHF-UCL"/>
</dbReference>
<dbReference type="GO" id="GO:0043066">
    <property type="term" value="P:negative regulation of apoptotic process"/>
    <property type="evidence" value="ECO:0000315"/>
    <property type="project" value="UniProtKB"/>
</dbReference>
<dbReference type="GO" id="GO:1902166">
    <property type="term" value="P:negative regulation of intrinsic apoptotic signaling pathway in response to DNA damage by p53 class mediator"/>
    <property type="evidence" value="ECO:0000315"/>
    <property type="project" value="BHF-UCL"/>
</dbReference>
<dbReference type="GO" id="GO:0090201">
    <property type="term" value="P:negative regulation of release of cytochrome c from mitochondria"/>
    <property type="evidence" value="ECO:0000315"/>
    <property type="project" value="UniProtKB"/>
</dbReference>
<dbReference type="GO" id="GO:0045332">
    <property type="term" value="P:phospholipid translocation"/>
    <property type="evidence" value="ECO:0000318"/>
    <property type="project" value="GO_Central"/>
</dbReference>
<dbReference type="GO" id="GO:0015914">
    <property type="term" value="P:phospholipid transport"/>
    <property type="evidence" value="ECO:0000314"/>
    <property type="project" value="UniProtKB"/>
</dbReference>
<dbReference type="GO" id="GO:2001140">
    <property type="term" value="P:positive regulation of phospholipid transport"/>
    <property type="evidence" value="ECO:0000314"/>
    <property type="project" value="UniProtKB"/>
</dbReference>
<dbReference type="GO" id="GO:0045944">
    <property type="term" value="P:positive regulation of transcription by RNA polymerase II"/>
    <property type="evidence" value="ECO:0000314"/>
    <property type="project" value="BHF-UCL"/>
</dbReference>
<dbReference type="GO" id="GO:0097035">
    <property type="term" value="P:regulation of membrane lipid distribution"/>
    <property type="evidence" value="ECO:0000315"/>
    <property type="project" value="UniProtKB"/>
</dbReference>
<dbReference type="DisProt" id="DP01835"/>
<dbReference type="InterPro" id="IPR007918">
    <property type="entry name" value="MDM35_apoptosis"/>
</dbReference>
<dbReference type="PANTHER" id="PTHR46403">
    <property type="entry name" value="TP53-REGULATED INHIBITOR OF APOPTOSIS 1"/>
    <property type="match status" value="1"/>
</dbReference>
<dbReference type="PANTHER" id="PTHR46403:SF1">
    <property type="entry name" value="TP53-REGULATED INHIBITOR OF APOPTOSIS 1"/>
    <property type="match status" value="1"/>
</dbReference>
<dbReference type="Pfam" id="PF05254">
    <property type="entry name" value="UPF0203"/>
    <property type="match status" value="1"/>
</dbReference>
<dbReference type="PROSITE" id="PS51808">
    <property type="entry name" value="CHCH"/>
    <property type="match status" value="1"/>
</dbReference>
<sequence>MNSVGEACTDMKREYDQCFNRWFAEKFLKGDSSGDPCTDLFKRYQQCVQKAIKEKEIPIEGLEFMGHGKEKPENSS</sequence>
<evidence type="ECO:0000255" key="1">
    <source>
        <dbReference type="PROSITE-ProRule" id="PRU01150"/>
    </source>
</evidence>
<evidence type="ECO:0000269" key="2">
    <source>
    </source>
</evidence>
<evidence type="ECO:0000269" key="3">
    <source>
    </source>
</evidence>
<evidence type="ECO:0000269" key="4">
    <source>
    </source>
</evidence>
<evidence type="ECO:0000305" key="5"/>
<evidence type="ECO:0007744" key="6">
    <source>
        <dbReference type="PDB" id="4XZS"/>
    </source>
</evidence>
<evidence type="ECO:0007744" key="7">
    <source>
        <dbReference type="PDB" id="4XZV"/>
    </source>
</evidence>
<evidence type="ECO:0007744" key="8">
    <source>
    </source>
</evidence>
<evidence type="ECO:0007744" key="9">
    <source>
    </source>
</evidence>
<evidence type="ECO:0007829" key="10">
    <source>
        <dbReference type="PDB" id="6I3V"/>
    </source>
</evidence>
<evidence type="ECO:0007829" key="11">
    <source>
        <dbReference type="PDB" id="6I4Y"/>
    </source>
</evidence>
<gene>
    <name type="primary">TRIAP1</name>
    <name type="synonym">15E1.1</name>
    <name type="ORF">HSPC132</name>
</gene>